<name>PHR_THET2</name>
<organism>
    <name type="scientific">Thermus thermophilus (strain ATCC BAA-163 / DSM 7039 / HB27)</name>
    <dbReference type="NCBI Taxonomy" id="262724"/>
    <lineage>
        <taxon>Bacteria</taxon>
        <taxon>Thermotogati</taxon>
        <taxon>Deinococcota</taxon>
        <taxon>Deinococci</taxon>
        <taxon>Thermales</taxon>
        <taxon>Thermaceae</taxon>
        <taxon>Thermus</taxon>
    </lineage>
</organism>
<geneLocation type="plasmid">
    <name>pTT27</name>
</geneLocation>
<protein>
    <recommendedName>
        <fullName>Deoxyribodipyrimidine photo-lyase</fullName>
        <ecNumber>4.1.99.3</ecNumber>
    </recommendedName>
    <alternativeName>
        <fullName>DNA photolyase</fullName>
    </alternativeName>
    <alternativeName>
        <fullName>Photoreactivating enzyme</fullName>
    </alternativeName>
</protein>
<keyword id="KW-0157">Chromophore</keyword>
<keyword id="KW-0903">Direct protein sequencing</keyword>
<keyword id="KW-0227">DNA damage</keyword>
<keyword id="KW-0234">DNA repair</keyword>
<keyword id="KW-0238">DNA-binding</keyword>
<keyword id="KW-0274">FAD</keyword>
<keyword id="KW-0285">Flavoprotein</keyword>
<keyword id="KW-0456">Lyase</keyword>
<keyword id="KW-0547">Nucleotide-binding</keyword>
<keyword id="KW-0614">Plasmid</keyword>
<evidence type="ECO:0000250" key="1"/>
<evidence type="ECO:0000256" key="2">
    <source>
        <dbReference type="SAM" id="MobiDB-lite"/>
    </source>
</evidence>
<evidence type="ECO:0000305" key="3"/>
<gene>
    <name type="primary">phr</name>
    <name type="ordered locus">TT_P0058</name>
</gene>
<sequence length="420" mass="47909">MGPLLVWHRGDLRLHDHPALLEALARGPVVGLVVLDPNNLKTTPRRRAWFLENVRALREAYRARGGALWVLEGLPWEKVPEAARRLKAKAVYALTSYTPYGRYRDAKVQEALPVPLHLLPAPHLLPPDLPRAYRVYTPFARRFLGVEAPLPAPEALPKGPEEGEIPREDPGLPLPEPGEEAALAGLRAFLEAKLPRYAEERDRLDGEGGSRLSPYFALGVLSPRLAAWEAERRGGEGARKWVAELLWRDFSYHLLYHFPWMAERPLDPRFQALPWQEDEALFRAWYEGRTGVPLVDAAMRELHATGFLSNRARMNAAQFAVKHLLLPWKRCEEAFRHLLLDGDRAVNLQGWQWAGGLGVDAAPYFRVFNPVLQGERHDPEGRWLKRWAPEYPSYAPKDPVVDLEEARRRYLRLARDLARG</sequence>
<comment type="function">
    <text>Involved in repair of UV radiation-induced DNA damage. Catalyzes the light-dependent monomerization (300-600 nm) of cyclobutyl pyrimidine dimers (in cis-syn configuration), which are formed between adjacent bases on the same DNA strand upon exposure to ultraviolet radiation.</text>
</comment>
<comment type="catalytic activity">
    <reaction>
        <text>cyclobutadipyrimidine (in DNA) = 2 pyrimidine residues (in DNA).</text>
        <dbReference type="EC" id="4.1.99.3"/>
    </reaction>
</comment>
<comment type="cofactor">
    <cofactor>
        <name>FAD</name>
        <dbReference type="ChEBI" id="CHEBI:57692"/>
    </cofactor>
    <text>Binds 1 FAD per subunit.</text>
</comment>
<comment type="subunit">
    <text>Monomer.</text>
</comment>
<comment type="similarity">
    <text evidence="3">Belongs to the DNA photolyase class-1 family.</text>
</comment>
<dbReference type="EC" id="4.1.99.3"/>
<dbReference type="EMBL" id="AB001637">
    <property type="protein sequence ID" value="BAA22943.1"/>
    <property type="molecule type" value="Genomic_DNA"/>
</dbReference>
<dbReference type="EMBL" id="AE017222">
    <property type="protein sequence ID" value="AAS82388.1"/>
    <property type="molecule type" value="Genomic_DNA"/>
</dbReference>
<dbReference type="RefSeq" id="WP_011174501.1">
    <property type="nucleotide sequence ID" value="NC_005838.1"/>
</dbReference>
<dbReference type="SMR" id="P61496"/>
<dbReference type="KEGG" id="tth:TT_P0058"/>
<dbReference type="eggNOG" id="COG0415">
    <property type="taxonomic scope" value="Bacteria"/>
</dbReference>
<dbReference type="HOGENOM" id="CLU_010348_2_2_0"/>
<dbReference type="OrthoDB" id="9772484at2"/>
<dbReference type="Proteomes" id="UP000000592">
    <property type="component" value="Plasmid pTT27"/>
</dbReference>
<dbReference type="GO" id="GO:0003904">
    <property type="term" value="F:deoxyribodipyrimidine photo-lyase activity"/>
    <property type="evidence" value="ECO:0007669"/>
    <property type="project" value="UniProtKB-EC"/>
</dbReference>
<dbReference type="GO" id="GO:0003677">
    <property type="term" value="F:DNA binding"/>
    <property type="evidence" value="ECO:0007669"/>
    <property type="project" value="UniProtKB-KW"/>
</dbReference>
<dbReference type="GO" id="GO:0071949">
    <property type="term" value="F:FAD binding"/>
    <property type="evidence" value="ECO:0007669"/>
    <property type="project" value="TreeGrafter"/>
</dbReference>
<dbReference type="GO" id="GO:0006281">
    <property type="term" value="P:DNA repair"/>
    <property type="evidence" value="ECO:0007669"/>
    <property type="project" value="UniProtKB-KW"/>
</dbReference>
<dbReference type="GO" id="GO:0009416">
    <property type="term" value="P:response to light stimulus"/>
    <property type="evidence" value="ECO:0007669"/>
    <property type="project" value="TreeGrafter"/>
</dbReference>
<dbReference type="Gene3D" id="1.25.40.80">
    <property type="match status" value="1"/>
</dbReference>
<dbReference type="Gene3D" id="1.10.579.10">
    <property type="entry name" value="DNA Cyclobutane Dipyrimidine Photolyase, subunit A, domain 3"/>
    <property type="match status" value="1"/>
</dbReference>
<dbReference type="Gene3D" id="3.40.50.620">
    <property type="entry name" value="HUPs"/>
    <property type="match status" value="1"/>
</dbReference>
<dbReference type="InterPro" id="IPR036134">
    <property type="entry name" value="Crypto/Photolyase_FAD-like_sf"/>
</dbReference>
<dbReference type="InterPro" id="IPR036155">
    <property type="entry name" value="Crypto/Photolyase_N_sf"/>
</dbReference>
<dbReference type="InterPro" id="IPR005101">
    <property type="entry name" value="Cryptochr/Photolyase_FAD-bd"/>
</dbReference>
<dbReference type="InterPro" id="IPR002081">
    <property type="entry name" value="Cryptochrome/DNA_photolyase_1"/>
</dbReference>
<dbReference type="InterPro" id="IPR018394">
    <property type="entry name" value="DNA_photolyase_1_CS_C"/>
</dbReference>
<dbReference type="InterPro" id="IPR006050">
    <property type="entry name" value="DNA_photolyase_N"/>
</dbReference>
<dbReference type="InterPro" id="IPR014729">
    <property type="entry name" value="Rossmann-like_a/b/a_fold"/>
</dbReference>
<dbReference type="PANTHER" id="PTHR11455">
    <property type="entry name" value="CRYPTOCHROME"/>
    <property type="match status" value="1"/>
</dbReference>
<dbReference type="PANTHER" id="PTHR11455:SF9">
    <property type="entry name" value="CRYPTOCHROME CIRCADIAN CLOCK 5 ISOFORM X1"/>
    <property type="match status" value="1"/>
</dbReference>
<dbReference type="Pfam" id="PF00875">
    <property type="entry name" value="DNA_photolyase"/>
    <property type="match status" value="1"/>
</dbReference>
<dbReference type="Pfam" id="PF03441">
    <property type="entry name" value="FAD_binding_7"/>
    <property type="match status" value="1"/>
</dbReference>
<dbReference type="PRINTS" id="PR00147">
    <property type="entry name" value="DNAPHOTLYASE"/>
</dbReference>
<dbReference type="SUPFAM" id="SSF48173">
    <property type="entry name" value="Cryptochrome/photolyase FAD-binding domain"/>
    <property type="match status" value="1"/>
</dbReference>
<dbReference type="SUPFAM" id="SSF52425">
    <property type="entry name" value="Cryptochrome/photolyase, N-terminal domain"/>
    <property type="match status" value="1"/>
</dbReference>
<dbReference type="PROSITE" id="PS00394">
    <property type="entry name" value="DNA_PHOTOLYASES_1_1"/>
    <property type="match status" value="1"/>
</dbReference>
<dbReference type="PROSITE" id="PS00691">
    <property type="entry name" value="DNA_PHOTOLYASES_1_2"/>
    <property type="match status" value="1"/>
</dbReference>
<dbReference type="PROSITE" id="PS51645">
    <property type="entry name" value="PHR_CRY_ALPHA_BETA"/>
    <property type="match status" value="1"/>
</dbReference>
<proteinExistence type="evidence at protein level"/>
<reference key="1">
    <citation type="journal article" date="1997" name="J. Bacteriol.">
        <title>Characterization of a thermostable DNA photolyase from an extremely thermophilic bacterium, Thermus thermophilus HB27.</title>
        <authorList>
            <person name="Kato R."/>
            <person name="Hasegawa K."/>
            <person name="Hidaka Y."/>
            <person name="Kuramitsu S."/>
            <person name="Hoshino T."/>
        </authorList>
    </citation>
    <scope>NUCLEOTIDE SEQUENCE [GENOMIC DNA]</scope>
    <scope>PROTEIN SEQUENCE OF 1-10</scope>
</reference>
<reference key="2">
    <citation type="journal article" date="2004" name="Nat. Biotechnol.">
        <title>The genome sequence of the extreme thermophile Thermus thermophilus.</title>
        <authorList>
            <person name="Henne A."/>
            <person name="Brueggemann H."/>
            <person name="Raasch C."/>
            <person name="Wiezer A."/>
            <person name="Hartsch T."/>
            <person name="Liesegang H."/>
            <person name="Johann A."/>
            <person name="Lienard T."/>
            <person name="Gohl O."/>
            <person name="Martinez-Arias R."/>
            <person name="Jacobi C."/>
            <person name="Starkuviene V."/>
            <person name="Schlenczeck S."/>
            <person name="Dencker S."/>
            <person name="Huber R."/>
            <person name="Klenk H.-P."/>
            <person name="Kramer W."/>
            <person name="Merkl R."/>
            <person name="Gottschalk G."/>
            <person name="Fritz H.-J."/>
        </authorList>
    </citation>
    <scope>NUCLEOTIDE SEQUENCE [LARGE SCALE GENOMIC DNA]</scope>
    <source>
        <strain>ATCC BAA-163 / DSM 7039 / HB27</strain>
        <plasmid>pTT27</plasmid>
    </source>
</reference>
<reference key="3">
    <citation type="journal article" date="1993" name="Appl. Environ. Microbiol.">
        <title>Molecular cloning and sequence analysis of the crtB gene of Thermus thermophilus HB27, an extreme thermophile producing carotenoid pigments.</title>
        <authorList>
            <person name="Hoshino T."/>
            <person name="Fujii R."/>
            <person name="Nakahara T."/>
        </authorList>
    </citation>
    <scope>NUCLEOTIDE SEQUENCE [GENOMIC DNA] OF 1-194</scope>
</reference>
<accession>P61496</accession>
<accession>P37250</accession>
<feature type="chain" id="PRO_0000085114" description="Deoxyribodipyrimidine photo-lyase">
    <location>
        <begin position="1"/>
        <end position="420"/>
    </location>
</feature>
<feature type="domain" description="Photolyase/cryptochrome alpha/beta">
    <location>
        <begin position="2"/>
        <end position="124"/>
    </location>
</feature>
<feature type="region of interest" description="Disordered" evidence="2">
    <location>
        <begin position="152"/>
        <end position="175"/>
    </location>
</feature>
<feature type="region of interest" description="Interaction with DNA" evidence="1">
    <location>
        <begin position="244"/>
        <end position="251"/>
    </location>
</feature>
<feature type="region of interest" description="Interaction with DNA" evidence="1">
    <location>
        <begin position="310"/>
        <end position="311"/>
    </location>
</feature>
<feature type="compositionally biased region" description="Basic and acidic residues" evidence="2">
    <location>
        <begin position="159"/>
        <end position="170"/>
    </location>
</feature>
<feature type="binding site" evidence="1">
    <location>
        <position position="197"/>
    </location>
    <ligand>
        <name>FAD</name>
        <dbReference type="ChEBI" id="CHEBI:57692"/>
    </ligand>
</feature>
<feature type="binding site" evidence="1">
    <location>
        <position position="201"/>
    </location>
    <ligand>
        <name>DNA</name>
        <dbReference type="ChEBI" id="CHEBI:16991"/>
    </ligand>
</feature>
<feature type="binding site" evidence="1">
    <location>
        <begin position="209"/>
        <end position="213"/>
    </location>
    <ligand>
        <name>FAD</name>
        <dbReference type="ChEBI" id="CHEBI:57692"/>
    </ligand>
</feature>
<feature type="binding site" evidence="1">
    <location>
        <begin position="341"/>
        <end position="343"/>
    </location>
    <ligand>
        <name>FAD</name>
        <dbReference type="ChEBI" id="CHEBI:57692"/>
    </ligand>
</feature>
<feature type="binding site" evidence="1">
    <location>
        <position position="373"/>
    </location>
    <ligand>
        <name>DNA</name>
        <dbReference type="ChEBI" id="CHEBI:16991"/>
    </ligand>
</feature>
<feature type="site" description="Electron transfer via tryptophanyl radical" evidence="1">
    <location>
        <position position="275"/>
    </location>
</feature>
<feature type="site" description="Electron transfer via tryptophanyl radical" evidence="1">
    <location>
        <position position="328"/>
    </location>
</feature>
<feature type="site" description="Electron transfer via tryptophanyl radical" evidence="1">
    <location>
        <position position="351"/>
    </location>
</feature>
<feature type="sequence conflict" description="In Ref. 1; BAA22943." evidence="3" ref="1">
    <original>R</original>
    <variation>A</variation>
    <location>
        <position position="196"/>
    </location>
</feature>